<evidence type="ECO:0000255" key="1">
    <source>
        <dbReference type="PROSITE-ProRule" id="PRU00175"/>
    </source>
</evidence>
<evidence type="ECO:0000269" key="2">
    <source>
    </source>
</evidence>
<evidence type="ECO:0000269" key="3">
    <source>
    </source>
</evidence>
<evidence type="ECO:0000269" key="4">
    <source>
    </source>
</evidence>
<evidence type="ECO:0000303" key="5">
    <source>
    </source>
</evidence>
<evidence type="ECO:0000305" key="6"/>
<name>RHA2B_ARATH</name>
<organism>
    <name type="scientific">Arabidopsis thaliana</name>
    <name type="common">Mouse-ear cress</name>
    <dbReference type="NCBI Taxonomy" id="3702"/>
    <lineage>
        <taxon>Eukaryota</taxon>
        <taxon>Viridiplantae</taxon>
        <taxon>Streptophyta</taxon>
        <taxon>Embryophyta</taxon>
        <taxon>Tracheophyta</taxon>
        <taxon>Spermatophyta</taxon>
        <taxon>Magnoliopsida</taxon>
        <taxon>eudicotyledons</taxon>
        <taxon>Gunneridae</taxon>
        <taxon>Pentapetalae</taxon>
        <taxon>rosids</taxon>
        <taxon>malvids</taxon>
        <taxon>Brassicales</taxon>
        <taxon>Brassicaceae</taxon>
        <taxon>Camelineae</taxon>
        <taxon>Arabidopsis</taxon>
    </lineage>
</organism>
<keyword id="KW-0938">Abscisic acid signaling pathway</keyword>
<keyword id="KW-0963">Cytoplasm</keyword>
<keyword id="KW-0479">Metal-binding</keyword>
<keyword id="KW-0539">Nucleus</keyword>
<keyword id="KW-1185">Reference proteome</keyword>
<keyword id="KW-0346">Stress response</keyword>
<keyword id="KW-0808">Transferase</keyword>
<keyword id="KW-0833">Ubl conjugation pathway</keyword>
<keyword id="KW-0862">Zinc</keyword>
<keyword id="KW-0863">Zinc-finger</keyword>
<gene>
    <name evidence="5" type="primary">RHA2B</name>
    <name type="ordered locus">At2g01150</name>
    <name type="ORF">F10A8.3</name>
</gene>
<accession>Q9ZU51</accession>
<feature type="chain" id="PRO_0000056036" description="E3 ubiquitin-protein ligase RHA2B">
    <location>
        <begin position="1"/>
        <end position="147"/>
    </location>
</feature>
<feature type="zinc finger region" description="RING-type; atypical" evidence="1">
    <location>
        <begin position="74"/>
        <end position="116"/>
    </location>
</feature>
<sequence>MGLQGQLSDVSSDSIPLMLLALLATFFRHVRSLLLFPSSAPVVVVTSNLSVLADQLNLNRLFSYRYSDNAASDCIVCLSKLKTGEEVRKLDCRHVFHKQCLEGWLQHLNFNCPLCRSPLLPHHHQGHGSDASISAFPLRSTSTASSH</sequence>
<protein>
    <recommendedName>
        <fullName evidence="6">E3 ubiquitin-protein ligase RHA2B</fullName>
        <ecNumber>2.3.2.27</ecNumber>
    </recommendedName>
    <alternativeName>
        <fullName evidence="5">RING-H2 finger A2b</fullName>
    </alternativeName>
    <alternativeName>
        <fullName evidence="6">RING-H2 zinc finger protein RHA2b</fullName>
    </alternativeName>
    <alternativeName>
        <fullName evidence="6">RING-type E3 ubiquitin transferase RHA2B</fullName>
    </alternativeName>
</protein>
<proteinExistence type="evidence at protein level"/>
<comment type="function">
    <text evidence="4">E3 ubiquitin-protein ligase involved in the positive regulation of abscisic acid (ABA) signaling and responses to salt and osmotic stresses during seed germination and early seedling development. Acts additively with RHA2A in regulating ABA signaling and drought response. Possesses E3 ubiquitin ligase activity in vitro.</text>
</comment>
<comment type="catalytic activity">
    <reaction>
        <text>S-ubiquitinyl-[E2 ubiquitin-conjugating enzyme]-L-cysteine + [acceptor protein]-L-lysine = [E2 ubiquitin-conjugating enzyme]-L-cysteine + N(6)-ubiquitinyl-[acceptor protein]-L-lysine.</text>
        <dbReference type="EC" id="2.3.2.27"/>
    </reaction>
</comment>
<comment type="pathway">
    <text>Protein modification; protein ubiquitination.</text>
</comment>
<comment type="subunit">
    <text evidence="3">Interacts with NAC19.</text>
</comment>
<comment type="subcellular location">
    <subcellularLocation>
        <location evidence="4">Cytoplasm</location>
    </subcellularLocation>
    <subcellularLocation>
        <location evidence="4">Nucleus</location>
    </subcellularLocation>
</comment>
<comment type="tissue specificity">
    <text evidence="2">Expressed in vascular tissue, root tips, embryos and pistils.</text>
</comment>
<comment type="induction">
    <text evidence="2">By the proteasome inhibitor MG132. Down-regulated during reinitiation of mitotic activity.</text>
</comment>
<comment type="domain">
    <text>The ring domain is sufficient for the interaction with NAC19.</text>
</comment>
<comment type="disruption phenotype">
    <text evidence="2">No visible phenotype.</text>
</comment>
<dbReference type="EC" id="2.3.2.27"/>
<dbReference type="EMBL" id="AF078823">
    <property type="protein sequence ID" value="AAC68672.1"/>
    <property type="molecule type" value="mRNA"/>
</dbReference>
<dbReference type="EMBL" id="AC006200">
    <property type="protein sequence ID" value="AAD14516.2"/>
    <property type="molecule type" value="Genomic_DNA"/>
</dbReference>
<dbReference type="EMBL" id="CP002685">
    <property type="protein sequence ID" value="AEC05407.1"/>
    <property type="molecule type" value="Genomic_DNA"/>
</dbReference>
<dbReference type="PIR" id="C84421">
    <property type="entry name" value="C84421"/>
</dbReference>
<dbReference type="PIR" id="T51843">
    <property type="entry name" value="T51843"/>
</dbReference>
<dbReference type="RefSeq" id="NP_001318169.1">
    <property type="nucleotide sequence ID" value="NM_001335035.1"/>
</dbReference>
<dbReference type="SMR" id="Q9ZU51"/>
<dbReference type="BioGRID" id="48">
    <property type="interactions" value="1"/>
</dbReference>
<dbReference type="IntAct" id="Q9ZU51">
    <property type="interactions" value="1"/>
</dbReference>
<dbReference type="STRING" id="3702.Q9ZU51"/>
<dbReference type="iPTMnet" id="Q9ZU51"/>
<dbReference type="PaxDb" id="3702-AT2G01150.1"/>
<dbReference type="EnsemblPlants" id="AT2G01150.1">
    <property type="protein sequence ID" value="AT2G01150.1"/>
    <property type="gene ID" value="AT2G01150"/>
</dbReference>
<dbReference type="GeneID" id="814644"/>
<dbReference type="Gramene" id="AT2G01150.1">
    <property type="protein sequence ID" value="AT2G01150.1"/>
    <property type="gene ID" value="AT2G01150"/>
</dbReference>
<dbReference type="KEGG" id="ath:AT2G01150"/>
<dbReference type="Araport" id="AT2G01150"/>
<dbReference type="TAIR" id="AT2G01150">
    <property type="gene designation" value="RHA2B"/>
</dbReference>
<dbReference type="eggNOG" id="KOG0800">
    <property type="taxonomic scope" value="Eukaryota"/>
</dbReference>
<dbReference type="HOGENOM" id="CLU_013137_18_5_1"/>
<dbReference type="InParanoid" id="Q9ZU51"/>
<dbReference type="OMA" id="TIMHGID"/>
<dbReference type="PhylomeDB" id="Q9ZU51"/>
<dbReference type="BRENDA" id="2.3.2.27">
    <property type="organism ID" value="399"/>
</dbReference>
<dbReference type="UniPathway" id="UPA00143"/>
<dbReference type="PRO" id="PR:Q9ZU51"/>
<dbReference type="Proteomes" id="UP000006548">
    <property type="component" value="Chromosome 2"/>
</dbReference>
<dbReference type="ExpressionAtlas" id="Q9ZU51">
    <property type="expression patterns" value="baseline and differential"/>
</dbReference>
<dbReference type="GO" id="GO:0005737">
    <property type="term" value="C:cytoplasm"/>
    <property type="evidence" value="ECO:0000314"/>
    <property type="project" value="UniProtKB"/>
</dbReference>
<dbReference type="GO" id="GO:0005634">
    <property type="term" value="C:nucleus"/>
    <property type="evidence" value="ECO:0000314"/>
    <property type="project" value="UniProtKB"/>
</dbReference>
<dbReference type="GO" id="GO:0000976">
    <property type="term" value="F:transcription cis-regulatory region binding"/>
    <property type="evidence" value="ECO:0000353"/>
    <property type="project" value="TAIR"/>
</dbReference>
<dbReference type="GO" id="GO:0061630">
    <property type="term" value="F:ubiquitin protein ligase activity"/>
    <property type="evidence" value="ECO:0000314"/>
    <property type="project" value="UniProtKB"/>
</dbReference>
<dbReference type="GO" id="GO:0004842">
    <property type="term" value="F:ubiquitin-protein transferase activity"/>
    <property type="evidence" value="ECO:0000304"/>
    <property type="project" value="TAIR"/>
</dbReference>
<dbReference type="GO" id="GO:0008270">
    <property type="term" value="F:zinc ion binding"/>
    <property type="evidence" value="ECO:0007669"/>
    <property type="project" value="UniProtKB-KW"/>
</dbReference>
<dbReference type="GO" id="GO:0009738">
    <property type="term" value="P:abscisic acid-activated signaling pathway"/>
    <property type="evidence" value="ECO:0007669"/>
    <property type="project" value="UniProtKB-KW"/>
</dbReference>
<dbReference type="GO" id="GO:0071456">
    <property type="term" value="P:cellular response to hypoxia"/>
    <property type="evidence" value="ECO:0007007"/>
    <property type="project" value="TAIR"/>
</dbReference>
<dbReference type="GO" id="GO:0009789">
    <property type="term" value="P:positive regulation of abscisic acid-activated signaling pathway"/>
    <property type="evidence" value="ECO:0000315"/>
    <property type="project" value="UniProtKB"/>
</dbReference>
<dbReference type="GO" id="GO:0016567">
    <property type="term" value="P:protein ubiquitination"/>
    <property type="evidence" value="ECO:0000314"/>
    <property type="project" value="UniProtKB"/>
</dbReference>
<dbReference type="GO" id="GO:0047484">
    <property type="term" value="P:regulation of response to osmotic stress"/>
    <property type="evidence" value="ECO:0000315"/>
    <property type="project" value="UniProtKB"/>
</dbReference>
<dbReference type="CDD" id="cd23123">
    <property type="entry name" value="RING-H2_RHA2B"/>
    <property type="match status" value="1"/>
</dbReference>
<dbReference type="FunFam" id="3.30.40.10:FF:001001">
    <property type="entry name" value="RING-H2 finger protein 2B"/>
    <property type="match status" value="1"/>
</dbReference>
<dbReference type="Gene3D" id="3.30.40.10">
    <property type="entry name" value="Zinc/RING finger domain, C3HC4 (zinc finger)"/>
    <property type="match status" value="1"/>
</dbReference>
<dbReference type="InterPro" id="IPR001841">
    <property type="entry name" value="Znf_RING"/>
</dbReference>
<dbReference type="InterPro" id="IPR013083">
    <property type="entry name" value="Znf_RING/FYVE/PHD"/>
</dbReference>
<dbReference type="PANTHER" id="PTHR47662">
    <property type="entry name" value="RING-TYPE DOMAIN-CONTAINING PROTEIN"/>
    <property type="match status" value="1"/>
</dbReference>
<dbReference type="PANTHER" id="PTHR47662:SF1">
    <property type="entry name" value="RING-TYPE DOMAIN-CONTAINING PROTEIN"/>
    <property type="match status" value="1"/>
</dbReference>
<dbReference type="Pfam" id="PF13639">
    <property type="entry name" value="zf-RING_2"/>
    <property type="match status" value="1"/>
</dbReference>
<dbReference type="SMART" id="SM00184">
    <property type="entry name" value="RING"/>
    <property type="match status" value="1"/>
</dbReference>
<dbReference type="SUPFAM" id="SSF57850">
    <property type="entry name" value="RING/U-box"/>
    <property type="match status" value="1"/>
</dbReference>
<dbReference type="PROSITE" id="PS50089">
    <property type="entry name" value="ZF_RING_2"/>
    <property type="match status" value="1"/>
</dbReference>
<reference key="1">
    <citation type="journal article" date="1998" name="FEBS Lett.">
        <title>Widespread occurrence of a highly conserved RING-H2 zinc finger motif in the model plant Arabidopsis thaliana.</title>
        <authorList>
            <person name="Jensen R.B."/>
            <person name="Jensen K.L."/>
            <person name="Jespersen H.M."/>
            <person name="Skriver K."/>
        </authorList>
    </citation>
    <scope>NUCLEOTIDE SEQUENCE [MRNA]</scope>
    <source>
        <strain>cv. Columbia</strain>
    </source>
</reference>
<reference key="2">
    <citation type="journal article" date="1999" name="Nature">
        <title>Sequence and analysis of chromosome 2 of the plant Arabidopsis thaliana.</title>
        <authorList>
            <person name="Lin X."/>
            <person name="Kaul S."/>
            <person name="Rounsley S.D."/>
            <person name="Shea T.P."/>
            <person name="Benito M.-I."/>
            <person name="Town C.D."/>
            <person name="Fujii C.Y."/>
            <person name="Mason T.M."/>
            <person name="Bowman C.L."/>
            <person name="Barnstead M.E."/>
            <person name="Feldblyum T.V."/>
            <person name="Buell C.R."/>
            <person name="Ketchum K.A."/>
            <person name="Lee J.J."/>
            <person name="Ronning C.M."/>
            <person name="Koo H.L."/>
            <person name="Moffat K.S."/>
            <person name="Cronin L.A."/>
            <person name="Shen M."/>
            <person name="Pai G."/>
            <person name="Van Aken S."/>
            <person name="Umayam L."/>
            <person name="Tallon L.J."/>
            <person name="Gill J.E."/>
            <person name="Adams M.D."/>
            <person name="Carrera A.J."/>
            <person name="Creasy T.H."/>
            <person name="Goodman H.M."/>
            <person name="Somerville C.R."/>
            <person name="Copenhaver G.P."/>
            <person name="Preuss D."/>
            <person name="Nierman W.C."/>
            <person name="White O."/>
            <person name="Eisen J.A."/>
            <person name="Salzberg S.L."/>
            <person name="Fraser C.M."/>
            <person name="Venter J.C."/>
        </authorList>
    </citation>
    <scope>NUCLEOTIDE SEQUENCE [LARGE SCALE GENOMIC DNA]</scope>
    <source>
        <strain>cv. Columbia</strain>
    </source>
</reference>
<reference key="3">
    <citation type="journal article" date="2017" name="Plant J.">
        <title>Araport11: a complete reannotation of the Arabidopsis thaliana reference genome.</title>
        <authorList>
            <person name="Cheng C.Y."/>
            <person name="Krishnakumar V."/>
            <person name="Chan A.P."/>
            <person name="Thibaud-Nissen F."/>
            <person name="Schobel S."/>
            <person name="Town C.D."/>
        </authorList>
    </citation>
    <scope>GENOME REANNOTATION</scope>
    <source>
        <strain>cv. Columbia</strain>
    </source>
</reference>
<reference key="4">
    <citation type="journal article" date="2002" name="Gene">
        <title>A gene trap Dissociation insertion line, associated with a RING-H2 finger gene, shows tissue specific and developmental regulated expression of the gene in Arabidopsis.</title>
        <authorList>
            <person name="Lechner E."/>
            <person name="Goloubinoff P."/>
            <person name="Genschik P."/>
            <person name="Shen W.H."/>
        </authorList>
    </citation>
    <scope>TISSUE SPECIFICITY</scope>
    <scope>INDUCTION</scope>
    <scope>DISRUPTION PHENOTYPE</scope>
</reference>
<reference key="5">
    <citation type="journal article" date="2003" name="Biochem. J.">
        <title>Interactions between plant RING-H2 and plant-specific NAC (NAM/ATAF1/2/CUC2) proteins: RING-H2 molecular specificity and cellular localization.</title>
        <authorList>
            <person name="Greve K."/>
            <person name="La Cour T."/>
            <person name="Jensen M.K."/>
            <person name="Poulsen F.M."/>
            <person name="Skriver K."/>
        </authorList>
    </citation>
    <scope>INTERACTION WITH NAC19</scope>
</reference>
<reference key="6">
    <citation type="journal article" date="2011" name="Plant Physiol.">
        <title>The Arabidopsis RING finger E3 ligase RHA2b acts additively with RHA2a in regulating abscisic acid signaling and drought response.</title>
        <authorList>
            <person name="Li H."/>
            <person name="Jiang H."/>
            <person name="Bu Q."/>
            <person name="Zhao Q."/>
            <person name="Sun J."/>
            <person name="Xie Q."/>
            <person name="Li C."/>
        </authorList>
    </citation>
    <scope>FUNCTION</scope>
    <scope>SUBCELLULAR LOCATION</scope>
</reference>